<evidence type="ECO:0000255" key="1">
    <source>
        <dbReference type="HAMAP-Rule" id="MF_01171"/>
    </source>
</evidence>
<reference key="1">
    <citation type="journal article" date="2011" name="J. Bacteriol.">
        <title>Comparative genomics of 28 Salmonella enterica isolates: evidence for CRISPR-mediated adaptive sublineage evolution.</title>
        <authorList>
            <person name="Fricke W.F."/>
            <person name="Mammel M.K."/>
            <person name="McDermott P.F."/>
            <person name="Tartera C."/>
            <person name="White D.G."/>
            <person name="Leclerc J.E."/>
            <person name="Ravel J."/>
            <person name="Cebula T.A."/>
        </authorList>
    </citation>
    <scope>NUCLEOTIDE SEQUENCE [LARGE SCALE GENOMIC DNA]</scope>
    <source>
        <strain>CVM19633</strain>
    </source>
</reference>
<dbReference type="EC" id="2.3.1.109" evidence="1"/>
<dbReference type="EMBL" id="CP001127">
    <property type="protein sequence ID" value="ACF90601.1"/>
    <property type="molecule type" value="Genomic_DNA"/>
</dbReference>
<dbReference type="RefSeq" id="WP_001263885.1">
    <property type="nucleotide sequence ID" value="NC_011094.1"/>
</dbReference>
<dbReference type="SMR" id="B4TUC2"/>
<dbReference type="KEGG" id="sew:SeSA_A1399"/>
<dbReference type="HOGENOM" id="CLU_057655_0_0_6"/>
<dbReference type="UniPathway" id="UPA00185">
    <property type="reaction ID" value="UER00279"/>
</dbReference>
<dbReference type="Proteomes" id="UP000001865">
    <property type="component" value="Chromosome"/>
</dbReference>
<dbReference type="GO" id="GO:0008791">
    <property type="term" value="F:arginine N-succinyltransferase activity"/>
    <property type="evidence" value="ECO:0007669"/>
    <property type="project" value="UniProtKB-UniRule"/>
</dbReference>
<dbReference type="GO" id="GO:0019544">
    <property type="term" value="P:arginine catabolic process to glutamate"/>
    <property type="evidence" value="ECO:0007669"/>
    <property type="project" value="UniProtKB-UniRule"/>
</dbReference>
<dbReference type="GO" id="GO:0019545">
    <property type="term" value="P:arginine catabolic process to succinate"/>
    <property type="evidence" value="ECO:0007669"/>
    <property type="project" value="UniProtKB-UniRule"/>
</dbReference>
<dbReference type="Gene3D" id="2.40.40.20">
    <property type="match status" value="1"/>
</dbReference>
<dbReference type="Gene3D" id="3.40.630.30">
    <property type="match status" value="1"/>
</dbReference>
<dbReference type="HAMAP" id="MF_01171">
    <property type="entry name" value="AstA"/>
    <property type="match status" value="1"/>
</dbReference>
<dbReference type="InterPro" id="IPR016181">
    <property type="entry name" value="Acyl_CoA_acyltransferase"/>
</dbReference>
<dbReference type="InterPro" id="IPR007041">
    <property type="entry name" value="Arg_succinylTrfase_AstA/AruG"/>
</dbReference>
<dbReference type="InterPro" id="IPR017650">
    <property type="entry name" value="Arginine_N-succinylTrfase"/>
</dbReference>
<dbReference type="NCBIfam" id="TIGR03243">
    <property type="entry name" value="arg_catab_AOST"/>
    <property type="match status" value="1"/>
</dbReference>
<dbReference type="NCBIfam" id="TIGR03244">
    <property type="entry name" value="arg_catab_AstA"/>
    <property type="match status" value="1"/>
</dbReference>
<dbReference type="NCBIfam" id="NF007770">
    <property type="entry name" value="PRK10456.1"/>
    <property type="match status" value="1"/>
</dbReference>
<dbReference type="PANTHER" id="PTHR30420:SF1">
    <property type="entry name" value="ARGININE N-SUCCINYLTRANSFERASE"/>
    <property type="match status" value="1"/>
</dbReference>
<dbReference type="PANTHER" id="PTHR30420">
    <property type="entry name" value="N-SUCCINYLARGININE DIHYDROLASE"/>
    <property type="match status" value="1"/>
</dbReference>
<dbReference type="Pfam" id="PF04958">
    <property type="entry name" value="AstA"/>
    <property type="match status" value="1"/>
</dbReference>
<dbReference type="SUPFAM" id="SSF55729">
    <property type="entry name" value="Acyl-CoA N-acyltransferases (Nat)"/>
    <property type="match status" value="1"/>
</dbReference>
<accession>B4TUC2</accession>
<comment type="function">
    <text evidence="1">Catalyzes the transfer of succinyl-CoA to arginine to produce N(2)-succinylarginine.</text>
</comment>
<comment type="catalytic activity">
    <reaction evidence="1">
        <text>succinyl-CoA + L-arginine = N(2)-succinyl-L-arginine + CoA + H(+)</text>
        <dbReference type="Rhea" id="RHEA:15185"/>
        <dbReference type="ChEBI" id="CHEBI:15378"/>
        <dbReference type="ChEBI" id="CHEBI:32682"/>
        <dbReference type="ChEBI" id="CHEBI:57287"/>
        <dbReference type="ChEBI" id="CHEBI:57292"/>
        <dbReference type="ChEBI" id="CHEBI:58241"/>
        <dbReference type="EC" id="2.3.1.109"/>
    </reaction>
</comment>
<comment type="pathway">
    <text evidence="1">Amino-acid degradation; L-arginine degradation via AST pathway; L-glutamate and succinate from L-arginine: step 1/5.</text>
</comment>
<comment type="similarity">
    <text evidence="1">Belongs to the arginine N-succinyltransferase family.</text>
</comment>
<organism>
    <name type="scientific">Salmonella schwarzengrund (strain CVM19633)</name>
    <dbReference type="NCBI Taxonomy" id="439843"/>
    <lineage>
        <taxon>Bacteria</taxon>
        <taxon>Pseudomonadati</taxon>
        <taxon>Pseudomonadota</taxon>
        <taxon>Gammaproteobacteria</taxon>
        <taxon>Enterobacterales</taxon>
        <taxon>Enterobacteriaceae</taxon>
        <taxon>Salmonella</taxon>
    </lineage>
</organism>
<keyword id="KW-0012">Acyltransferase</keyword>
<keyword id="KW-0056">Arginine metabolism</keyword>
<keyword id="KW-0808">Transferase</keyword>
<proteinExistence type="inferred from homology"/>
<name>ASTA_SALSV</name>
<feature type="chain" id="PRO_1000137990" description="Arginine N-succinyltransferase">
    <location>
        <begin position="1"/>
        <end position="344"/>
    </location>
</feature>
<feature type="active site" description="Proton donor" evidence="1">
    <location>
        <position position="229"/>
    </location>
</feature>
<feature type="binding site" evidence="1">
    <location>
        <position position="125"/>
    </location>
    <ligand>
        <name>succinyl-CoA</name>
        <dbReference type="ChEBI" id="CHEBI:57292"/>
    </ligand>
</feature>
<gene>
    <name evidence="1" type="primary">astA</name>
    <name type="ordered locus">SeSA_A1399</name>
</gene>
<sequence>MRVIRPVEHADIAALMQLAGKTGGGLTSLPANEATLAARIERALKTWSDELPKGEQGYVFVLEDSETGEVGGICAIEVAVGLNDPWYNYRVGTLVHASKELNVYNALPTLFLSNDHTGSSELCTLFLDPEWRKEGNGYLLSKSRFMFMAAFRDKFNEKVVAEMRGVIDEHGYSPFWQSLGKRFFSMDFSRADFLCGTGQKAFIAELMPKHPIYTHFLSEEAQAVIGEVHPQTAPARAVLEKEGFRYRHYIDIFDGGPTLECDIDRVRAIRKSRLVEVAEGQPAPGDYPACLVANENYHHFRAALVRADPQTSRLVLTAAQLDALKCRAGDHVRLVRLCAEEKTV</sequence>
<protein>
    <recommendedName>
        <fullName evidence="1">Arginine N-succinyltransferase</fullName>
        <shortName evidence="1">AST</shortName>
        <ecNumber evidence="1">2.3.1.109</ecNumber>
    </recommendedName>
    <alternativeName>
        <fullName evidence="1">AOST</fullName>
    </alternativeName>
</protein>